<reference key="1">
    <citation type="journal article" date="2004" name="Nature">
        <title>Genome sequence of the Brown Norway rat yields insights into mammalian evolution.</title>
        <authorList>
            <person name="Gibbs R.A."/>
            <person name="Weinstock G.M."/>
            <person name="Metzker M.L."/>
            <person name="Muzny D.M."/>
            <person name="Sodergren E.J."/>
            <person name="Scherer S."/>
            <person name="Scott G."/>
            <person name="Steffen D."/>
            <person name="Worley K.C."/>
            <person name="Burch P.E."/>
            <person name="Okwuonu G."/>
            <person name="Hines S."/>
            <person name="Lewis L."/>
            <person name="Deramo C."/>
            <person name="Delgado O."/>
            <person name="Dugan-Rocha S."/>
            <person name="Miner G."/>
            <person name="Morgan M."/>
            <person name="Hawes A."/>
            <person name="Gill R."/>
            <person name="Holt R.A."/>
            <person name="Adams M.D."/>
            <person name="Amanatides P.G."/>
            <person name="Baden-Tillson H."/>
            <person name="Barnstead M."/>
            <person name="Chin S."/>
            <person name="Evans C.A."/>
            <person name="Ferriera S."/>
            <person name="Fosler C."/>
            <person name="Glodek A."/>
            <person name="Gu Z."/>
            <person name="Jennings D."/>
            <person name="Kraft C.L."/>
            <person name="Nguyen T."/>
            <person name="Pfannkoch C.M."/>
            <person name="Sitter C."/>
            <person name="Sutton G.G."/>
            <person name="Venter J.C."/>
            <person name="Woodage T."/>
            <person name="Smith D."/>
            <person name="Lee H.-M."/>
            <person name="Gustafson E."/>
            <person name="Cahill P."/>
            <person name="Kana A."/>
            <person name="Doucette-Stamm L."/>
            <person name="Weinstock K."/>
            <person name="Fechtel K."/>
            <person name="Weiss R.B."/>
            <person name="Dunn D.M."/>
            <person name="Green E.D."/>
            <person name="Blakesley R.W."/>
            <person name="Bouffard G.G."/>
            <person name="De Jong P.J."/>
            <person name="Osoegawa K."/>
            <person name="Zhu B."/>
            <person name="Marra M."/>
            <person name="Schein J."/>
            <person name="Bosdet I."/>
            <person name="Fjell C."/>
            <person name="Jones S."/>
            <person name="Krzywinski M."/>
            <person name="Mathewson C."/>
            <person name="Siddiqui A."/>
            <person name="Wye N."/>
            <person name="McPherson J."/>
            <person name="Zhao S."/>
            <person name="Fraser C.M."/>
            <person name="Shetty J."/>
            <person name="Shatsman S."/>
            <person name="Geer K."/>
            <person name="Chen Y."/>
            <person name="Abramzon S."/>
            <person name="Nierman W.C."/>
            <person name="Havlak P.H."/>
            <person name="Chen R."/>
            <person name="Durbin K.J."/>
            <person name="Egan A."/>
            <person name="Ren Y."/>
            <person name="Song X.-Z."/>
            <person name="Li B."/>
            <person name="Liu Y."/>
            <person name="Qin X."/>
            <person name="Cawley S."/>
            <person name="Cooney A.J."/>
            <person name="D'Souza L.M."/>
            <person name="Martin K."/>
            <person name="Wu J.Q."/>
            <person name="Gonzalez-Garay M.L."/>
            <person name="Jackson A.R."/>
            <person name="Kalafus K.J."/>
            <person name="McLeod M.P."/>
            <person name="Milosavljevic A."/>
            <person name="Virk D."/>
            <person name="Volkov A."/>
            <person name="Wheeler D.A."/>
            <person name="Zhang Z."/>
            <person name="Bailey J.A."/>
            <person name="Eichler E.E."/>
            <person name="Tuzun E."/>
            <person name="Birney E."/>
            <person name="Mongin E."/>
            <person name="Ureta-Vidal A."/>
            <person name="Woodwark C."/>
            <person name="Zdobnov E."/>
            <person name="Bork P."/>
            <person name="Suyama M."/>
            <person name="Torrents D."/>
            <person name="Alexandersson M."/>
            <person name="Trask B.J."/>
            <person name="Young J.M."/>
            <person name="Huang H."/>
            <person name="Wang H."/>
            <person name="Xing H."/>
            <person name="Daniels S."/>
            <person name="Gietzen D."/>
            <person name="Schmidt J."/>
            <person name="Stevens K."/>
            <person name="Vitt U."/>
            <person name="Wingrove J."/>
            <person name="Camara F."/>
            <person name="Mar Alba M."/>
            <person name="Abril J.F."/>
            <person name="Guigo R."/>
            <person name="Smit A."/>
            <person name="Dubchak I."/>
            <person name="Rubin E.M."/>
            <person name="Couronne O."/>
            <person name="Poliakov A."/>
            <person name="Huebner N."/>
            <person name="Ganten D."/>
            <person name="Goesele C."/>
            <person name="Hummel O."/>
            <person name="Kreitler T."/>
            <person name="Lee Y.-A."/>
            <person name="Monti J."/>
            <person name="Schulz H."/>
            <person name="Zimdahl H."/>
            <person name="Himmelbauer H."/>
            <person name="Lehrach H."/>
            <person name="Jacob H.J."/>
            <person name="Bromberg S."/>
            <person name="Gullings-Handley J."/>
            <person name="Jensen-Seaman M.I."/>
            <person name="Kwitek A.E."/>
            <person name="Lazar J."/>
            <person name="Pasko D."/>
            <person name="Tonellato P.J."/>
            <person name="Twigger S."/>
            <person name="Ponting C.P."/>
            <person name="Duarte J.M."/>
            <person name="Rice S."/>
            <person name="Goodstadt L."/>
            <person name="Beatson S.A."/>
            <person name="Emes R.D."/>
            <person name="Winter E.E."/>
            <person name="Webber C."/>
            <person name="Brandt P."/>
            <person name="Nyakatura G."/>
            <person name="Adetobi M."/>
            <person name="Chiaromonte F."/>
            <person name="Elnitski L."/>
            <person name="Eswara P."/>
            <person name="Hardison R.C."/>
            <person name="Hou M."/>
            <person name="Kolbe D."/>
            <person name="Makova K."/>
            <person name="Miller W."/>
            <person name="Nekrutenko A."/>
            <person name="Riemer C."/>
            <person name="Schwartz S."/>
            <person name="Taylor J."/>
            <person name="Yang S."/>
            <person name="Zhang Y."/>
            <person name="Lindpaintner K."/>
            <person name="Andrews T.D."/>
            <person name="Caccamo M."/>
            <person name="Clamp M."/>
            <person name="Clarke L."/>
            <person name="Curwen V."/>
            <person name="Durbin R.M."/>
            <person name="Eyras E."/>
            <person name="Searle S.M."/>
            <person name="Cooper G.M."/>
            <person name="Batzoglou S."/>
            <person name="Brudno M."/>
            <person name="Sidow A."/>
            <person name="Stone E.A."/>
            <person name="Payseur B.A."/>
            <person name="Bourque G."/>
            <person name="Lopez-Otin C."/>
            <person name="Puente X.S."/>
            <person name="Chakrabarti K."/>
            <person name="Chatterji S."/>
            <person name="Dewey C."/>
            <person name="Pachter L."/>
            <person name="Bray N."/>
            <person name="Yap V.B."/>
            <person name="Caspi A."/>
            <person name="Tesler G."/>
            <person name="Pevzner P.A."/>
            <person name="Haussler D."/>
            <person name="Roskin K.M."/>
            <person name="Baertsch R."/>
            <person name="Clawson H."/>
            <person name="Furey T.S."/>
            <person name="Hinrichs A.S."/>
            <person name="Karolchik D."/>
            <person name="Kent W.J."/>
            <person name="Rosenbloom K.R."/>
            <person name="Trumbower H."/>
            <person name="Weirauch M."/>
            <person name="Cooper D.N."/>
            <person name="Stenson P.D."/>
            <person name="Ma B."/>
            <person name="Brent M."/>
            <person name="Arumugam M."/>
            <person name="Shteynberg D."/>
            <person name="Copley R.R."/>
            <person name="Taylor M.S."/>
            <person name="Riethman H."/>
            <person name="Mudunuri U."/>
            <person name="Peterson J."/>
            <person name="Guyer M."/>
            <person name="Felsenfeld A."/>
            <person name="Old S."/>
            <person name="Mockrin S."/>
            <person name="Collins F.S."/>
        </authorList>
    </citation>
    <scope>NUCLEOTIDE SEQUENCE [LARGE SCALE GENOMIC DNA]</scope>
    <source>
        <strain>Brown Norway</strain>
    </source>
</reference>
<reference key="2">
    <citation type="journal article" date="2004" name="Mol. Cell. Proteomics">
        <title>Proteomic characterization of protein phosphatase complexes of the mammalian nucleus.</title>
        <authorList>
            <person name="Tran H.T."/>
            <person name="Ulke A."/>
            <person name="Morrice N."/>
            <person name="Johannes C.J."/>
            <person name="Moorhead G.B."/>
        </authorList>
    </citation>
    <scope>SUBCELLULAR LOCATION</scope>
    <scope>INTERACTION WITH PPP1CA</scope>
</reference>
<reference key="3">
    <citation type="journal article" date="2007" name="Biochim. Biophys. Acta">
        <title>The nuclear PP1 interacting protein ZAP3 (ZAP) is a putative nucleoside kinase that complexes with SAM68, CIA, NF110/45, and HNRNP-G.</title>
        <authorList>
            <person name="Ulke-Lemee A."/>
            <person name="Trinkle-Mulcahy L."/>
            <person name="Chaulk S."/>
            <person name="Bernstein N.K."/>
            <person name="Morrice N."/>
            <person name="Glover M."/>
            <person name="Lamond A.I."/>
            <person name="Moorhead G.B.G."/>
        </authorList>
    </citation>
    <scope>SUBCELLULAR LOCATION</scope>
    <scope>IDENTIFICATION BY MASS SPECTROMETRY</scope>
    <scope>IDENTIFICATION IN A COMPLEX WITH ILF2; ILF3; KHDRBS1; RBMX; NCOA5 AND PPP1CA</scope>
    <scope>INTERACTION WITH PPP1CA AND NCOA5</scope>
    <scope>TISSUE SPECIFICITY</scope>
</reference>
<organism>
    <name type="scientific">Rattus norvegicus</name>
    <name type="common">Rat</name>
    <dbReference type="NCBI Taxonomy" id="10116"/>
    <lineage>
        <taxon>Eukaryota</taxon>
        <taxon>Metazoa</taxon>
        <taxon>Chordata</taxon>
        <taxon>Craniata</taxon>
        <taxon>Vertebrata</taxon>
        <taxon>Euteleostomi</taxon>
        <taxon>Mammalia</taxon>
        <taxon>Eutheria</taxon>
        <taxon>Euarchontoglires</taxon>
        <taxon>Glires</taxon>
        <taxon>Rodentia</taxon>
        <taxon>Myomorpha</taxon>
        <taxon>Muroidea</taxon>
        <taxon>Muridae</taxon>
        <taxon>Murinae</taxon>
        <taxon>Rattus</taxon>
    </lineage>
</organism>
<sequence length="1376" mass="154270">MYPNWGRYGGSSHYPPPPVPPPPPPVALPEASPGPGYSSSTAPAAPSSSGFMSFREQHLAQLQQLQQMHQKQMQCVLQPHHLPPPPLPPPPVMPGGGYGDWQPPPPPMPPPPGPALSYQKQQQYKHQMIHHQRDGPPGLVPMELESPPESPPVPPGSYMPPSQSYMPPPQPPPSYYPPSSAQPYLPPAQPSPSKPQLPPPPPSIPSGNKTTIQQEPLETGAKNKNAEQKQAAPEPDPSTMTPQEQQQYWYRQHLLSLQQRTKVHLPGHKKGLVTAKDVPEPIKEEAPVPATSQIAEPLAAEEPPLPPPNEEMPPPLPPEEPQNNSSEMSEDPEEDARLKQLQAAAAHWQQHQQHRVGFQYQGIMQRHTQLQQILQQYQQVIQHSPHIQTMSLDVQLRHYEMQQQQFQRLYQEWEREFQLWEEQLHSYPHKDQLEEYEKQWKSWQGHMRATQTYLQEKVTSFQAVKNQYMGNMAMPPPFVPYSQMPPPLPTMPPPVLPPSLPPPVMPPALPSTIPPPGMPPPVMPPSLPTSVPPPGMPPSLSSAVLPPPSLSSAGPPPVLPPPSLSGAPPVLPLPPLSSATPPPGIPPPGVPQGMPPQLTAPVPPASSSQNSQVPEKPRQALLPTPVSFGSTPPSPYHPPPQSEQGNSKPLNKVFSSEQGLGESSSALSQSVIAAKDTPVKSGGLLADPPKGSFLEGPRGPREQKEQLQKLKDFGSEPQTADHLPPPDSRLQNTSRPGMYPPPGSYRPPPPMGKPPGSIVRPSAPPARSCVPMTRPPVPIPPPPPPPPPPPPPPPVIKPKTSSVKQERWDEDSFFGLWDTNDDQGLNSEFKRDTAAIPSAPVLPPPPVHPSIPPPGPMPMGMPPMSKPPPVQHTVDYGHGRDMPTNKVEQIPYGERITLRPDPLPERSAFDADHAGQRDRYDRDRDREPYFDRQSNMTDHRDFKRDRETHRDRDRVLDYERDRFDRERRPRDDRNQSYRDKKDHSSSRRGGFDRPSYDRKSDRPPYEGPPMFGGERRTYPEERMPLPAPSLGHQPPPVPRVEKKPESKNVDDILKPPGRESRPERIVVIMRGLPGSGKTHVAKLIRDKEVEFGGPAPRVLSLDDYFIAEVEKEEKDPDSGKKVKKKVMEYEYEADMEETYRTSMFKTFKKTLDDGFFPFIILDAINDRVRHFDQFWSAAKTKGFEVYLAEMSADNQTCGKRNIHGRKLKEINKMAEHWEAAPRHMMRLDIRSLLQDAAIEEVEMEDFDANIEDQKEEKKDAEEEESELGYIPKSKWEMDTSEAKLDKLDGLRTGTKRKRDWEAIASRMEDYLQLPDDYETRASEPGKKRVRWADLEEKKDADRKRAIGFVVGQTDWEKITDESGHLAERALNRTKYI</sequence>
<comment type="function">
    <text evidence="1">Plays a role in the reduction of telomerase activity during differentiation of embryonic stem cells by binding to the core promoter of TERT and controlling its down-regulation.</text>
</comment>
<comment type="subunit">
    <text evidence="4 5">Interacts with PPP1CA and NCOA5. Forms a complex with ILF2, ILF3, KHDRBS1, RBMX, NCOA5 and PPP1CA.</text>
</comment>
<comment type="subcellular location">
    <subcellularLocation>
        <location evidence="4 5">Nucleus</location>
    </subcellularLocation>
    <subcellularLocation>
        <location evidence="1">Nucleus speckle</location>
    </subcellularLocation>
    <text>Migrates to nucleolar caps upon blockage of transcription.</text>
</comment>
<comment type="tissue specificity">
    <text evidence="5">High level expression seen in the brain, adipose tissue, heart and kidney, with a low level expression in muscle, spleen and lung (at protein level).</text>
</comment>
<dbReference type="SMR" id="P0CB49"/>
<dbReference type="CORUM" id="P0CB49"/>
<dbReference type="FunCoup" id="P0CB49">
    <property type="interactions" value="3532"/>
</dbReference>
<dbReference type="CarbonylDB" id="P0CB49"/>
<dbReference type="PhosphoSitePlus" id="P0CB49"/>
<dbReference type="jPOST" id="P0CB49"/>
<dbReference type="PaxDb" id="10116-ENSRNOP00000006492"/>
<dbReference type="UCSC" id="RGD:1564946">
    <property type="organism name" value="rat"/>
</dbReference>
<dbReference type="AGR" id="RGD:1564946"/>
<dbReference type="RGD" id="1564946">
    <property type="gene designation" value="Ylpm1"/>
</dbReference>
<dbReference type="eggNOG" id="KOG2400">
    <property type="taxonomic scope" value="Eukaryota"/>
</dbReference>
<dbReference type="InParanoid" id="P0CB49"/>
<dbReference type="PRO" id="PR:P0CB49"/>
<dbReference type="Proteomes" id="UP000002494">
    <property type="component" value="Unplaced"/>
</dbReference>
<dbReference type="GO" id="GO:0016607">
    <property type="term" value="C:nuclear speck"/>
    <property type="evidence" value="ECO:0007669"/>
    <property type="project" value="UniProtKB-SubCell"/>
</dbReference>
<dbReference type="GO" id="GO:0005634">
    <property type="term" value="C:nucleus"/>
    <property type="evidence" value="ECO:0000266"/>
    <property type="project" value="RGD"/>
</dbReference>
<dbReference type="GO" id="GO:0001227">
    <property type="term" value="F:DNA-binding transcription repressor activity, RNA polymerase II-specific"/>
    <property type="evidence" value="ECO:0000266"/>
    <property type="project" value="RGD"/>
</dbReference>
<dbReference type="GO" id="GO:0000122">
    <property type="term" value="P:negative regulation of transcription by RNA polymerase II"/>
    <property type="evidence" value="ECO:0000266"/>
    <property type="project" value="RGD"/>
</dbReference>
<dbReference type="GO" id="GO:0032204">
    <property type="term" value="P:regulation of telomere maintenance"/>
    <property type="evidence" value="ECO:0000266"/>
    <property type="project" value="RGD"/>
</dbReference>
<dbReference type="FunFam" id="3.40.50.300:FF:000399">
    <property type="entry name" value="YLP motif containing 1"/>
    <property type="match status" value="1"/>
</dbReference>
<dbReference type="Gene3D" id="3.40.50.300">
    <property type="entry name" value="P-loop containing nucleotide triphosphate hydrolases"/>
    <property type="match status" value="1"/>
</dbReference>
<dbReference type="InterPro" id="IPR027417">
    <property type="entry name" value="P-loop_NTPase"/>
</dbReference>
<dbReference type="InterPro" id="IPR026314">
    <property type="entry name" value="YLP_motif_con_p1"/>
</dbReference>
<dbReference type="PANTHER" id="PTHR13413">
    <property type="entry name" value="YLP MOTIF CONTAINING PROTEIN NUCLEAR PROTEIN ZAP"/>
    <property type="match status" value="1"/>
</dbReference>
<dbReference type="PANTHER" id="PTHR13413:SF0">
    <property type="entry name" value="YLP MOTIF-CONTAINING PROTEIN 1"/>
    <property type="match status" value="1"/>
</dbReference>
<dbReference type="Pfam" id="PF13671">
    <property type="entry name" value="AAA_33"/>
    <property type="match status" value="1"/>
</dbReference>
<dbReference type="SUPFAM" id="SSF52540">
    <property type="entry name" value="P-loop containing nucleoside triphosphate hydrolases"/>
    <property type="match status" value="1"/>
</dbReference>
<proteinExistence type="evidence at protein level"/>
<gene>
    <name type="primary">Ylpm1</name>
    <name type="synonym">Zap</name>
    <name type="synonym">Zap3</name>
</gene>
<evidence type="ECO:0000250" key="1"/>
<evidence type="ECO:0000250" key="2">
    <source>
        <dbReference type="UniProtKB" id="P49750"/>
    </source>
</evidence>
<evidence type="ECO:0000256" key="3">
    <source>
        <dbReference type="SAM" id="MobiDB-lite"/>
    </source>
</evidence>
<evidence type="ECO:0000269" key="4">
    <source>
    </source>
</evidence>
<evidence type="ECO:0000269" key="5">
    <source>
    </source>
</evidence>
<protein>
    <recommendedName>
        <fullName>YLP motif-containing protein 1</fullName>
    </recommendedName>
    <alternativeName>
        <fullName>Nuclear protein ZAP3</fullName>
    </alternativeName>
</protein>
<accession>P0CB49</accession>
<name>YLPM1_RAT</name>
<keyword id="KW-1017">Isopeptide bond</keyword>
<keyword id="KW-0488">Methylation</keyword>
<keyword id="KW-0539">Nucleus</keyword>
<keyword id="KW-1185">Reference proteome</keyword>
<keyword id="KW-0678">Repressor</keyword>
<keyword id="KW-0804">Transcription</keyword>
<keyword id="KW-0805">Transcription regulation</keyword>
<keyword id="KW-0832">Ubl conjugation</keyword>
<feature type="chain" id="PRO_0000386651" description="YLP motif-containing protein 1">
    <location>
        <begin position="1"/>
        <end position="1376"/>
    </location>
</feature>
<feature type="region of interest" description="Disordered" evidence="3">
    <location>
        <begin position="1"/>
        <end position="335"/>
    </location>
</feature>
<feature type="region of interest" description="Disordered" evidence="3">
    <location>
        <begin position="511"/>
        <end position="1058"/>
    </location>
</feature>
<feature type="region of interest" description="Involved in interaction with PPP1CA">
    <location>
        <begin position="1326"/>
        <end position="1333"/>
    </location>
</feature>
<feature type="compositionally biased region" description="Pro residues" evidence="3">
    <location>
        <begin position="14"/>
        <end position="27"/>
    </location>
</feature>
<feature type="compositionally biased region" description="Low complexity" evidence="3">
    <location>
        <begin position="31"/>
        <end position="50"/>
    </location>
</feature>
<feature type="compositionally biased region" description="Low complexity" evidence="3">
    <location>
        <begin position="59"/>
        <end position="80"/>
    </location>
</feature>
<feature type="compositionally biased region" description="Pro residues" evidence="3">
    <location>
        <begin position="81"/>
        <end position="93"/>
    </location>
</feature>
<feature type="compositionally biased region" description="Pro residues" evidence="3">
    <location>
        <begin position="102"/>
        <end position="114"/>
    </location>
</feature>
<feature type="compositionally biased region" description="Pro residues" evidence="3">
    <location>
        <begin position="148"/>
        <end position="158"/>
    </location>
</feature>
<feature type="compositionally biased region" description="Pro residues" evidence="3">
    <location>
        <begin position="166"/>
        <end position="176"/>
    </location>
</feature>
<feature type="compositionally biased region" description="Pro residues" evidence="3">
    <location>
        <begin position="184"/>
        <end position="204"/>
    </location>
</feature>
<feature type="compositionally biased region" description="Polar residues" evidence="3">
    <location>
        <begin position="207"/>
        <end position="216"/>
    </location>
</feature>
<feature type="compositionally biased region" description="Polar residues" evidence="3">
    <location>
        <begin position="238"/>
        <end position="260"/>
    </location>
</feature>
<feature type="compositionally biased region" description="Basic residues" evidence="3">
    <location>
        <begin position="261"/>
        <end position="271"/>
    </location>
</feature>
<feature type="compositionally biased region" description="Basic and acidic residues" evidence="3">
    <location>
        <begin position="277"/>
        <end position="286"/>
    </location>
</feature>
<feature type="compositionally biased region" description="Pro residues" evidence="3">
    <location>
        <begin position="303"/>
        <end position="320"/>
    </location>
</feature>
<feature type="compositionally biased region" description="Pro residues" evidence="3">
    <location>
        <begin position="511"/>
        <end position="537"/>
    </location>
</feature>
<feature type="compositionally biased region" description="Pro residues" evidence="3">
    <location>
        <begin position="545"/>
        <end position="594"/>
    </location>
</feature>
<feature type="compositionally biased region" description="Pro residues" evidence="3">
    <location>
        <begin position="632"/>
        <end position="641"/>
    </location>
</feature>
<feature type="compositionally biased region" description="Polar residues" evidence="3">
    <location>
        <begin position="642"/>
        <end position="671"/>
    </location>
</feature>
<feature type="compositionally biased region" description="Basic and acidic residues" evidence="3">
    <location>
        <begin position="698"/>
        <end position="714"/>
    </location>
</feature>
<feature type="compositionally biased region" description="Pro residues" evidence="3">
    <location>
        <begin position="738"/>
        <end position="753"/>
    </location>
</feature>
<feature type="compositionally biased region" description="Pro residues" evidence="3">
    <location>
        <begin position="773"/>
        <end position="796"/>
    </location>
</feature>
<feature type="compositionally biased region" description="Pro residues" evidence="3">
    <location>
        <begin position="840"/>
        <end position="870"/>
    </location>
</feature>
<feature type="compositionally biased region" description="Basic and acidic residues" evidence="3">
    <location>
        <begin position="896"/>
        <end position="930"/>
    </location>
</feature>
<feature type="compositionally biased region" description="Basic and acidic residues" evidence="3">
    <location>
        <begin position="937"/>
        <end position="1004"/>
    </location>
</feature>
<feature type="compositionally biased region" description="Basic and acidic residues" evidence="3">
    <location>
        <begin position="1013"/>
        <end position="1023"/>
    </location>
</feature>
<feature type="compositionally biased region" description="Basic and acidic residues" evidence="3">
    <location>
        <begin position="1039"/>
        <end position="1058"/>
    </location>
</feature>
<feature type="modified residue" description="N6-methyllysine" evidence="2">
    <location>
        <position position="675"/>
    </location>
</feature>
<feature type="cross-link" description="Glycyl lysine isopeptide (Lys-Gly) (interchain with G-Cter in SUMO2)" evidence="2">
    <location>
        <position position="886"/>
    </location>
</feature>
<feature type="cross-link" description="Glycyl lysine isopeptide (Lys-Gly) (interchain with G-Cter in SUMO2)" evidence="2">
    <location>
        <position position="943"/>
    </location>
</feature>